<feature type="chain" id="PRO_0000155856" description="Ribonuclease Z">
    <location>
        <begin position="1"/>
        <end position="304"/>
    </location>
</feature>
<feature type="active site" description="Proton acceptor" evidence="1">
    <location>
        <position position="67"/>
    </location>
</feature>
<feature type="binding site" evidence="1">
    <location>
        <position position="63"/>
    </location>
    <ligand>
        <name>Zn(2+)</name>
        <dbReference type="ChEBI" id="CHEBI:29105"/>
        <label>1</label>
        <note>catalytic</note>
    </ligand>
</feature>
<feature type="binding site" evidence="1">
    <location>
        <position position="65"/>
    </location>
    <ligand>
        <name>Zn(2+)</name>
        <dbReference type="ChEBI" id="CHEBI:29105"/>
        <label>1</label>
        <note>catalytic</note>
    </ligand>
</feature>
<feature type="binding site" evidence="1">
    <location>
        <position position="67"/>
    </location>
    <ligand>
        <name>Zn(2+)</name>
        <dbReference type="ChEBI" id="CHEBI:29105"/>
        <label>2</label>
        <note>catalytic</note>
    </ligand>
</feature>
<feature type="binding site" evidence="1">
    <location>
        <position position="68"/>
    </location>
    <ligand>
        <name>Zn(2+)</name>
        <dbReference type="ChEBI" id="CHEBI:29105"/>
        <label>2</label>
        <note>catalytic</note>
    </ligand>
</feature>
<feature type="binding site" evidence="1">
    <location>
        <position position="141"/>
    </location>
    <ligand>
        <name>Zn(2+)</name>
        <dbReference type="ChEBI" id="CHEBI:29105"/>
        <label>1</label>
        <note>catalytic</note>
    </ligand>
</feature>
<feature type="binding site" evidence="1">
    <location>
        <position position="208"/>
    </location>
    <ligand>
        <name>Zn(2+)</name>
        <dbReference type="ChEBI" id="CHEBI:29105"/>
        <label>1</label>
        <note>catalytic</note>
    </ligand>
</feature>
<feature type="binding site" evidence="1">
    <location>
        <position position="208"/>
    </location>
    <ligand>
        <name>Zn(2+)</name>
        <dbReference type="ChEBI" id="CHEBI:29105"/>
        <label>2</label>
        <note>catalytic</note>
    </ligand>
</feature>
<feature type="binding site" evidence="1">
    <location>
        <position position="266"/>
    </location>
    <ligand>
        <name>Zn(2+)</name>
        <dbReference type="ChEBI" id="CHEBI:29105"/>
        <label>2</label>
        <note>catalytic</note>
    </ligand>
</feature>
<gene>
    <name evidence="1" type="primary">rnz</name>
    <name type="ordered locus">TC_0625</name>
</gene>
<accession>Q9PK48</accession>
<name>RNZ_CHLMU</name>
<organism>
    <name type="scientific">Chlamydia muridarum (strain MoPn / Nigg)</name>
    <dbReference type="NCBI Taxonomy" id="243161"/>
    <lineage>
        <taxon>Bacteria</taxon>
        <taxon>Pseudomonadati</taxon>
        <taxon>Chlamydiota</taxon>
        <taxon>Chlamydiia</taxon>
        <taxon>Chlamydiales</taxon>
        <taxon>Chlamydiaceae</taxon>
        <taxon>Chlamydia/Chlamydophila group</taxon>
        <taxon>Chlamydia</taxon>
    </lineage>
</organism>
<evidence type="ECO:0000255" key="1">
    <source>
        <dbReference type="HAMAP-Rule" id="MF_01818"/>
    </source>
</evidence>
<proteinExistence type="inferred from homology"/>
<dbReference type="EC" id="3.1.26.11" evidence="1"/>
<dbReference type="EMBL" id="AE002160">
    <property type="protein sequence ID" value="AAF39456.1"/>
    <property type="molecule type" value="Genomic_DNA"/>
</dbReference>
<dbReference type="PIR" id="G81681">
    <property type="entry name" value="G81681"/>
</dbReference>
<dbReference type="RefSeq" id="WP_010231046.1">
    <property type="nucleotide sequence ID" value="NZ_CP063055.1"/>
</dbReference>
<dbReference type="SMR" id="Q9PK48"/>
<dbReference type="GeneID" id="1245985"/>
<dbReference type="KEGG" id="cmu:TC_0625"/>
<dbReference type="eggNOG" id="COG1234">
    <property type="taxonomic scope" value="Bacteria"/>
</dbReference>
<dbReference type="HOGENOM" id="CLU_031317_2_1_0"/>
<dbReference type="OrthoDB" id="9800940at2"/>
<dbReference type="Proteomes" id="UP000000800">
    <property type="component" value="Chromosome"/>
</dbReference>
<dbReference type="GO" id="GO:0042781">
    <property type="term" value="F:3'-tRNA processing endoribonuclease activity"/>
    <property type="evidence" value="ECO:0007669"/>
    <property type="project" value="UniProtKB-UniRule"/>
</dbReference>
<dbReference type="GO" id="GO:0008270">
    <property type="term" value="F:zinc ion binding"/>
    <property type="evidence" value="ECO:0007669"/>
    <property type="project" value="UniProtKB-UniRule"/>
</dbReference>
<dbReference type="CDD" id="cd07717">
    <property type="entry name" value="RNaseZ_ZiPD-like_MBL-fold"/>
    <property type="match status" value="1"/>
</dbReference>
<dbReference type="Gene3D" id="3.60.15.10">
    <property type="entry name" value="Ribonuclease Z/Hydroxyacylglutathione hydrolase-like"/>
    <property type="match status" value="1"/>
</dbReference>
<dbReference type="HAMAP" id="MF_01818">
    <property type="entry name" value="RNase_Z_BN"/>
    <property type="match status" value="1"/>
</dbReference>
<dbReference type="InterPro" id="IPR001279">
    <property type="entry name" value="Metallo-B-lactamas"/>
</dbReference>
<dbReference type="InterPro" id="IPR036866">
    <property type="entry name" value="RibonucZ/Hydroxyglut_hydro"/>
</dbReference>
<dbReference type="InterPro" id="IPR013471">
    <property type="entry name" value="RNase_Z/BN"/>
</dbReference>
<dbReference type="NCBIfam" id="NF000801">
    <property type="entry name" value="PRK00055.1-3"/>
    <property type="match status" value="1"/>
</dbReference>
<dbReference type="NCBIfam" id="NF000804">
    <property type="entry name" value="PRK00055.2-1"/>
    <property type="match status" value="1"/>
</dbReference>
<dbReference type="NCBIfam" id="TIGR02651">
    <property type="entry name" value="RNase_Z"/>
    <property type="match status" value="1"/>
</dbReference>
<dbReference type="PANTHER" id="PTHR46018">
    <property type="entry name" value="ZINC PHOSPHODIESTERASE ELAC PROTEIN 1"/>
    <property type="match status" value="1"/>
</dbReference>
<dbReference type="PANTHER" id="PTHR46018:SF2">
    <property type="entry name" value="ZINC PHOSPHODIESTERASE ELAC PROTEIN 1"/>
    <property type="match status" value="1"/>
</dbReference>
<dbReference type="Pfam" id="PF00753">
    <property type="entry name" value="Lactamase_B"/>
    <property type="match status" value="1"/>
</dbReference>
<dbReference type="SUPFAM" id="SSF56281">
    <property type="entry name" value="Metallo-hydrolase/oxidoreductase"/>
    <property type="match status" value="1"/>
</dbReference>
<keyword id="KW-0255">Endonuclease</keyword>
<keyword id="KW-0378">Hydrolase</keyword>
<keyword id="KW-0479">Metal-binding</keyword>
<keyword id="KW-0540">Nuclease</keyword>
<keyword id="KW-0819">tRNA processing</keyword>
<keyword id="KW-0862">Zinc</keyword>
<sequence>MSYRGLTILGCSSQQPTRHRNHGAYLLRWNGEGLLFDPGEGTQRQFIYANIAPTVVSRIFISHFHGDHCLGLGSMLMRLNLDKVSHPIHCYYPASGKKYFDRLRYSTIYHETIKVVEHPISSEGIVEDFGNFRIEARQLDHLVDTLGWRITEPDTTKFISEKIKAAGLKGPIMQELINKGIIKVNNNIIRLEDVSYTRKGDSIAVVADSLPCQAIVDLAKNARILLCESTYLEEHAHLAKNHYHMTAKQAAEQAKRAEAQQLILTHFSARYNTTEQFVQEAGEIFPNVFAAEEFCSYEFPKNAN</sequence>
<protein>
    <recommendedName>
        <fullName evidence="1">Ribonuclease Z</fullName>
        <shortName evidence="1">RNase Z</shortName>
        <ecNumber evidence="1">3.1.26.11</ecNumber>
    </recommendedName>
    <alternativeName>
        <fullName evidence="1">tRNA 3 endonuclease</fullName>
    </alternativeName>
    <alternativeName>
        <fullName evidence="1">tRNase Z</fullName>
    </alternativeName>
</protein>
<comment type="function">
    <text evidence="1">Zinc phosphodiesterase, which displays some tRNA 3'-processing endonuclease activity. Probably involved in tRNA maturation, by removing a 3'-trailer from precursor tRNA.</text>
</comment>
<comment type="catalytic activity">
    <reaction evidence="1">
        <text>Endonucleolytic cleavage of RNA, removing extra 3' nucleotides from tRNA precursor, generating 3' termini of tRNAs. A 3'-hydroxy group is left at the tRNA terminus and a 5'-phosphoryl group is left at the trailer molecule.</text>
        <dbReference type="EC" id="3.1.26.11"/>
    </reaction>
</comment>
<comment type="cofactor">
    <cofactor evidence="1">
        <name>Zn(2+)</name>
        <dbReference type="ChEBI" id="CHEBI:29105"/>
    </cofactor>
    <text evidence="1">Binds 2 Zn(2+) ions.</text>
</comment>
<comment type="subunit">
    <text evidence="1">Homodimer.</text>
</comment>
<comment type="similarity">
    <text evidence="1">Belongs to the RNase Z family.</text>
</comment>
<reference key="1">
    <citation type="journal article" date="2000" name="Nucleic Acids Res.">
        <title>Genome sequences of Chlamydia trachomatis MoPn and Chlamydia pneumoniae AR39.</title>
        <authorList>
            <person name="Read T.D."/>
            <person name="Brunham R.C."/>
            <person name="Shen C."/>
            <person name="Gill S.R."/>
            <person name="Heidelberg J.F."/>
            <person name="White O."/>
            <person name="Hickey E.K."/>
            <person name="Peterson J.D."/>
            <person name="Utterback T.R."/>
            <person name="Berry K.J."/>
            <person name="Bass S."/>
            <person name="Linher K.D."/>
            <person name="Weidman J.F."/>
            <person name="Khouri H.M."/>
            <person name="Craven B."/>
            <person name="Bowman C."/>
            <person name="Dodson R.J."/>
            <person name="Gwinn M.L."/>
            <person name="Nelson W.C."/>
            <person name="DeBoy R.T."/>
            <person name="Kolonay J.F."/>
            <person name="McClarty G."/>
            <person name="Salzberg S.L."/>
            <person name="Eisen J.A."/>
            <person name="Fraser C.M."/>
        </authorList>
    </citation>
    <scope>NUCLEOTIDE SEQUENCE [LARGE SCALE GENOMIC DNA]</scope>
    <source>
        <strain>MoPn / Nigg</strain>
    </source>
</reference>